<reference key="1">
    <citation type="journal article" date="2011" name="Stand. Genomic Sci.">
        <title>Complete genome sequence of 'Enterobacter lignolyticus' SCF1.</title>
        <authorList>
            <person name="Deangelis K.M."/>
            <person name="D'Haeseleer P."/>
            <person name="Chivian D."/>
            <person name="Fortney J.L."/>
            <person name="Khudyakov J."/>
            <person name="Simmons B."/>
            <person name="Woo H."/>
            <person name="Arkin A.P."/>
            <person name="Davenport K.W."/>
            <person name="Goodwin L."/>
            <person name="Chen A."/>
            <person name="Ivanova N."/>
            <person name="Kyrpides N.C."/>
            <person name="Mavromatis K."/>
            <person name="Woyke T."/>
            <person name="Hazen T.C."/>
        </authorList>
    </citation>
    <scope>NUCLEOTIDE SEQUENCE [LARGE SCALE GENOMIC DNA]</scope>
    <source>
        <strain>SCF1</strain>
    </source>
</reference>
<keyword id="KW-0963">Cytoplasm</keyword>
<keyword id="KW-0378">Hydrolase</keyword>
<keyword id="KW-1185">Reference proteome</keyword>
<accession>E3G5B9</accession>
<sequence>MIWKRHLSLEELNATSSSTLVAHLGIVYTRLGDDTLEAEMPVDNRTHQPFGLLHGGASAALAETLGSMAGYLMTRDGQCVVGTELNATHHRAVSQGRVRGVCQPLHLGRQSQSWEIVVFDEQGRRCCTCRLSTMVLG</sequence>
<feature type="chain" id="PRO_0000413865" description="Proofreading thioesterase EntH">
    <location>
        <begin position="1"/>
        <end position="137"/>
    </location>
</feature>
<feature type="active site" description="Nucleophile or proton acceptor" evidence="1">
    <location>
        <position position="63"/>
    </location>
</feature>
<protein>
    <recommendedName>
        <fullName evidence="1">Proofreading thioesterase EntH</fullName>
        <ecNumber evidence="1">3.1.2.-</ecNumber>
    </recommendedName>
    <alternativeName>
        <fullName evidence="1">Enterobactin synthase component H</fullName>
    </alternativeName>
</protein>
<gene>
    <name evidence="1" type="primary">entH</name>
    <name type="ordered locus">Entcl_3198</name>
</gene>
<organism>
    <name type="scientific">Enterobacter lignolyticus (strain SCF1)</name>
    <dbReference type="NCBI Taxonomy" id="701347"/>
    <lineage>
        <taxon>Bacteria</taxon>
        <taxon>Pseudomonadati</taxon>
        <taxon>Pseudomonadota</taxon>
        <taxon>Gammaproteobacteria</taxon>
        <taxon>Enterobacterales</taxon>
        <taxon>Enterobacteriaceae</taxon>
        <taxon>Pluralibacter</taxon>
    </lineage>
</organism>
<name>ENTH_ENTLS</name>
<proteinExistence type="inferred from homology"/>
<evidence type="ECO:0000255" key="1">
    <source>
        <dbReference type="HAMAP-Rule" id="MF_00907"/>
    </source>
</evidence>
<comment type="function">
    <text evidence="1">Required for optimal enterobactin synthesis. Acts as a proofreading enzyme that prevents EntB misacylation by hydrolyzing the thioester bound existing between EntB and wrongly charged molecules.</text>
</comment>
<comment type="pathway">
    <text evidence="1">Siderophore biosynthesis; enterobactin biosynthesis.</text>
</comment>
<comment type="subunit">
    <text evidence="1">Homotetramer. Dimer of dimers. Interacts specifically with the aryl carrier protein (ArCP) domain of EntB.</text>
</comment>
<comment type="subcellular location">
    <subcellularLocation>
        <location evidence="1">Cytoplasm</location>
    </subcellularLocation>
</comment>
<comment type="similarity">
    <text evidence="1">Belongs to the thioesterase PaaI family.</text>
</comment>
<dbReference type="EC" id="3.1.2.-" evidence="1"/>
<dbReference type="EMBL" id="CP002272">
    <property type="protein sequence ID" value="ADO49444.1"/>
    <property type="molecule type" value="Genomic_DNA"/>
</dbReference>
<dbReference type="RefSeq" id="WP_013367173.1">
    <property type="nucleotide sequence ID" value="NC_014618.1"/>
</dbReference>
<dbReference type="SMR" id="E3G5B9"/>
<dbReference type="STRING" id="701347.Entcl_3198"/>
<dbReference type="KEGG" id="esc:Entcl_3198"/>
<dbReference type="eggNOG" id="COG2050">
    <property type="taxonomic scope" value="Bacteria"/>
</dbReference>
<dbReference type="HOGENOM" id="CLU_089876_13_1_6"/>
<dbReference type="UniPathway" id="UPA00017"/>
<dbReference type="Proteomes" id="UP000006872">
    <property type="component" value="Chromosome"/>
</dbReference>
<dbReference type="GO" id="GO:0005829">
    <property type="term" value="C:cytosol"/>
    <property type="evidence" value="ECO:0007669"/>
    <property type="project" value="TreeGrafter"/>
</dbReference>
<dbReference type="GO" id="GO:0061522">
    <property type="term" value="F:1,4-dihydroxy-2-naphthoyl-CoA thioesterase activity"/>
    <property type="evidence" value="ECO:0007669"/>
    <property type="project" value="TreeGrafter"/>
</dbReference>
<dbReference type="GO" id="GO:0009239">
    <property type="term" value="P:enterobactin biosynthetic process"/>
    <property type="evidence" value="ECO:0007669"/>
    <property type="project" value="UniProtKB-UniRule"/>
</dbReference>
<dbReference type="CDD" id="cd03443">
    <property type="entry name" value="PaaI_thioesterase"/>
    <property type="match status" value="1"/>
</dbReference>
<dbReference type="FunFam" id="3.10.129.10:FF:000002">
    <property type="entry name" value="1,4-dihydroxy-2-naphthoyl-CoA hydrolase"/>
    <property type="match status" value="1"/>
</dbReference>
<dbReference type="Gene3D" id="3.10.129.10">
    <property type="entry name" value="Hotdog Thioesterase"/>
    <property type="match status" value="1"/>
</dbReference>
<dbReference type="HAMAP" id="MF_00907">
    <property type="entry name" value="Thioesterase_EntH"/>
    <property type="match status" value="1"/>
</dbReference>
<dbReference type="InterPro" id="IPR029069">
    <property type="entry name" value="HotDog_dom_sf"/>
</dbReference>
<dbReference type="InterPro" id="IPR003736">
    <property type="entry name" value="PAAI_dom"/>
</dbReference>
<dbReference type="InterPro" id="IPR026576">
    <property type="entry name" value="Thioesterase_EntH"/>
</dbReference>
<dbReference type="InterPro" id="IPR006683">
    <property type="entry name" value="Thioestr_dom"/>
</dbReference>
<dbReference type="NCBIfam" id="NF007607">
    <property type="entry name" value="PRK10254.1"/>
    <property type="match status" value="1"/>
</dbReference>
<dbReference type="NCBIfam" id="TIGR00369">
    <property type="entry name" value="unchar_dom_1"/>
    <property type="match status" value="1"/>
</dbReference>
<dbReference type="PANTHER" id="PTHR43240">
    <property type="entry name" value="1,4-DIHYDROXY-2-NAPHTHOYL-COA THIOESTERASE 1"/>
    <property type="match status" value="1"/>
</dbReference>
<dbReference type="PANTHER" id="PTHR43240:SF9">
    <property type="entry name" value="PROOFREADING THIOESTERASE ENTH"/>
    <property type="match status" value="1"/>
</dbReference>
<dbReference type="Pfam" id="PF03061">
    <property type="entry name" value="4HBT"/>
    <property type="match status" value="1"/>
</dbReference>
<dbReference type="SUPFAM" id="SSF54637">
    <property type="entry name" value="Thioesterase/thiol ester dehydrase-isomerase"/>
    <property type="match status" value="1"/>
</dbReference>